<comment type="function">
    <text evidence="3">Probable RNA-binding protein involved in the regulation of abscisic acid (ABA) response during seed germination. May regulate transcript levels of several germination-responsive genes under ABA.</text>
</comment>
<comment type="subcellular location">
    <subcellularLocation>
        <location evidence="3">Nucleus</location>
    </subcellularLocation>
</comment>
<comment type="alternative products">
    <event type="alternative splicing"/>
    <isoform>
        <id>Q9M1S3-1</id>
        <name>1</name>
        <sequence type="displayed"/>
    </isoform>
    <text evidence="5">A number of isoforms are produced. According to EST sequences.</text>
</comment>
<comment type="tissue specificity">
    <text evidence="3">Expressed in vasculature of leaves, roots and siliques.</text>
</comment>
<comment type="induction">
    <text evidence="3">Down-regulated by abscisic acid (ABA).</text>
</comment>
<comment type="disruption phenotype">
    <text evidence="3">No visible phenotype under normal growth conditions, but mutant seeds have decreased germination rate in presence of abscisic acid (ABA) or salt, compared to wild-type.</text>
</comment>
<comment type="sequence caution" evidence="5">
    <conflict type="miscellaneous discrepancy">
        <sequence resource="EMBL-CDS" id="BAF02089"/>
    </conflict>
    <text>Sequencing errors.</text>
</comment>
<reference key="1">
    <citation type="journal article" date="2000" name="Nature">
        <title>Sequence and analysis of chromosome 3 of the plant Arabidopsis thaliana.</title>
        <authorList>
            <person name="Salanoubat M."/>
            <person name="Lemcke K."/>
            <person name="Rieger M."/>
            <person name="Ansorge W."/>
            <person name="Unseld M."/>
            <person name="Fartmann B."/>
            <person name="Valle G."/>
            <person name="Bloecker H."/>
            <person name="Perez-Alonso M."/>
            <person name="Obermaier B."/>
            <person name="Delseny M."/>
            <person name="Boutry M."/>
            <person name="Grivell L.A."/>
            <person name="Mache R."/>
            <person name="Puigdomenech P."/>
            <person name="De Simone V."/>
            <person name="Choisne N."/>
            <person name="Artiguenave F."/>
            <person name="Robert C."/>
            <person name="Brottier P."/>
            <person name="Wincker P."/>
            <person name="Cattolico L."/>
            <person name="Weissenbach J."/>
            <person name="Saurin W."/>
            <person name="Quetier F."/>
            <person name="Schaefer M."/>
            <person name="Mueller-Auer S."/>
            <person name="Gabel C."/>
            <person name="Fuchs M."/>
            <person name="Benes V."/>
            <person name="Wurmbach E."/>
            <person name="Drzonek H."/>
            <person name="Erfle H."/>
            <person name="Jordan N."/>
            <person name="Bangert S."/>
            <person name="Wiedelmann R."/>
            <person name="Kranz H."/>
            <person name="Voss H."/>
            <person name="Holland R."/>
            <person name="Brandt P."/>
            <person name="Nyakatura G."/>
            <person name="Vezzi A."/>
            <person name="D'Angelo M."/>
            <person name="Pallavicini A."/>
            <person name="Toppo S."/>
            <person name="Simionati B."/>
            <person name="Conrad A."/>
            <person name="Hornischer K."/>
            <person name="Kauer G."/>
            <person name="Loehnert T.-H."/>
            <person name="Nordsiek G."/>
            <person name="Reichelt J."/>
            <person name="Scharfe M."/>
            <person name="Schoen O."/>
            <person name="Bargues M."/>
            <person name="Terol J."/>
            <person name="Climent J."/>
            <person name="Navarro P."/>
            <person name="Collado C."/>
            <person name="Perez-Perez A."/>
            <person name="Ottenwaelder B."/>
            <person name="Duchemin D."/>
            <person name="Cooke R."/>
            <person name="Laudie M."/>
            <person name="Berger-Llauro C."/>
            <person name="Purnelle B."/>
            <person name="Masuy D."/>
            <person name="de Haan M."/>
            <person name="Maarse A.C."/>
            <person name="Alcaraz J.-P."/>
            <person name="Cottet A."/>
            <person name="Casacuberta E."/>
            <person name="Monfort A."/>
            <person name="Argiriou A."/>
            <person name="Flores M."/>
            <person name="Liguori R."/>
            <person name="Vitale D."/>
            <person name="Mannhaupt G."/>
            <person name="Haase D."/>
            <person name="Schoof H."/>
            <person name="Rudd S."/>
            <person name="Zaccaria P."/>
            <person name="Mewes H.-W."/>
            <person name="Mayer K.F.X."/>
            <person name="Kaul S."/>
            <person name="Town C.D."/>
            <person name="Koo H.L."/>
            <person name="Tallon L.J."/>
            <person name="Jenkins J."/>
            <person name="Rooney T."/>
            <person name="Rizzo M."/>
            <person name="Walts A."/>
            <person name="Utterback T."/>
            <person name="Fujii C.Y."/>
            <person name="Shea T.P."/>
            <person name="Creasy T.H."/>
            <person name="Haas B."/>
            <person name="Maiti R."/>
            <person name="Wu D."/>
            <person name="Peterson J."/>
            <person name="Van Aken S."/>
            <person name="Pai G."/>
            <person name="Militscher J."/>
            <person name="Sellers P."/>
            <person name="Gill J.E."/>
            <person name="Feldblyum T.V."/>
            <person name="Preuss D."/>
            <person name="Lin X."/>
            <person name="Nierman W.C."/>
            <person name="Salzberg S.L."/>
            <person name="White O."/>
            <person name="Venter J.C."/>
            <person name="Fraser C.M."/>
            <person name="Kaneko T."/>
            <person name="Nakamura Y."/>
            <person name="Sato S."/>
            <person name="Kato T."/>
            <person name="Asamizu E."/>
            <person name="Sasamoto S."/>
            <person name="Kimura T."/>
            <person name="Idesawa K."/>
            <person name="Kawashima K."/>
            <person name="Kishida Y."/>
            <person name="Kiyokawa C."/>
            <person name="Kohara M."/>
            <person name="Matsumoto M."/>
            <person name="Matsuno A."/>
            <person name="Muraki A."/>
            <person name="Nakayama S."/>
            <person name="Nakazaki N."/>
            <person name="Shinpo S."/>
            <person name="Takeuchi C."/>
            <person name="Wada T."/>
            <person name="Watanabe A."/>
            <person name="Yamada M."/>
            <person name="Yasuda M."/>
            <person name="Tabata S."/>
        </authorList>
    </citation>
    <scope>NUCLEOTIDE SEQUENCE [LARGE SCALE GENOMIC DNA]</scope>
    <source>
        <strain>cv. Columbia</strain>
    </source>
</reference>
<reference key="2">
    <citation type="journal article" date="2017" name="Plant J.">
        <title>Araport11: a complete reannotation of the Arabidopsis thaliana reference genome.</title>
        <authorList>
            <person name="Cheng C.Y."/>
            <person name="Krishnakumar V."/>
            <person name="Chan A.P."/>
            <person name="Thibaud-Nissen F."/>
            <person name="Schobel S."/>
            <person name="Town C.D."/>
        </authorList>
    </citation>
    <scope>GENOME REANNOTATION</scope>
    <source>
        <strain>cv. Columbia</strain>
    </source>
</reference>
<reference key="3">
    <citation type="submission" date="2006-07" db="EMBL/GenBank/DDBJ databases">
        <title>Large-scale analysis of RIKEN Arabidopsis full-length (RAFL) cDNAs.</title>
        <authorList>
            <person name="Totoki Y."/>
            <person name="Seki M."/>
            <person name="Ishida J."/>
            <person name="Nakajima M."/>
            <person name="Enju A."/>
            <person name="Kamiya A."/>
            <person name="Narusaka M."/>
            <person name="Shin-i T."/>
            <person name="Nakagawa M."/>
            <person name="Sakamoto N."/>
            <person name="Oishi K."/>
            <person name="Kohara Y."/>
            <person name="Kobayashi M."/>
            <person name="Toyoda A."/>
            <person name="Sakaki Y."/>
            <person name="Sakurai T."/>
            <person name="Iida K."/>
            <person name="Akiyama K."/>
            <person name="Satou M."/>
            <person name="Toyoda T."/>
            <person name="Konagaya A."/>
            <person name="Carninci P."/>
            <person name="Kawai J."/>
            <person name="Hayashizaki Y."/>
            <person name="Shinozaki K."/>
        </authorList>
    </citation>
    <scope>NUCLEOTIDE SEQUENCE [LARGE SCALE MRNA]</scope>
    <source>
        <strain>cv. Columbia</strain>
    </source>
</reference>
<reference key="4">
    <citation type="submission" date="2002-03" db="EMBL/GenBank/DDBJ databases">
        <title>Full-length cDNA from Arabidopsis thaliana.</title>
        <authorList>
            <person name="Brover V.V."/>
            <person name="Troukhan M.E."/>
            <person name="Alexandrov N.A."/>
            <person name="Lu Y.-P."/>
            <person name="Flavell R.B."/>
            <person name="Feldmann K.A."/>
        </authorList>
    </citation>
    <scope>NUCLEOTIDE SEQUENCE [LARGE SCALE MRNA]</scope>
    <source>
        <strain>cv. Columbia</strain>
    </source>
</reference>
<reference key="5">
    <citation type="journal article" date="2013" name="J. Plant Physiol.">
        <title>An ABA-regulated putative RNA-binding protein affects seed germination of Arabidopsis under ABA or abiotic stress conditions.</title>
        <authorList>
            <person name="Jung H.J."/>
            <person name="Kim M.K."/>
            <person name="Kang H."/>
        </authorList>
    </citation>
    <scope>FUNCTION</scope>
    <scope>SUBCELLULAR LOCATION</scope>
    <scope>TISSUE SPECIFICITY</scope>
    <scope>INDUCTION</scope>
    <scope>DISRUPTION PHENOTYPE</scope>
</reference>
<name>ARP1_ARATH</name>
<sequence length="261" mass="28857">MTTSNNVNGCFGDTKLTKVFVGGLAWDTHKEAMYDHFIKYGDILEAVIISDKLTRRSKGYGFVTFKDAKAATRACEDSTPIINGRRANCNLASLGGRLRKSPTMTSPQQGPKNGNRATPPHVGNHSQWYYPSGFTNQQHQQQNHQAVPFYGYPSAYVAPNMTFNQKVGYVGGTYMNGYYAQMQPQPQSQPQPQYYHHHMYGGGRVMVGAASPMVPFYTVYPYHQSQAIGFPQPSFSKPLSFSTPPISGTVGGESIQKKAIH</sequence>
<keyword id="KW-0025">Alternative splicing</keyword>
<keyword id="KW-0539">Nucleus</keyword>
<keyword id="KW-1185">Reference proteome</keyword>
<keyword id="KW-0694">RNA-binding</keyword>
<keyword id="KW-0346">Stress response</keyword>
<dbReference type="EMBL" id="AL138650">
    <property type="protein sequence ID" value="CAB77597.1"/>
    <property type="molecule type" value="Genomic_DNA"/>
</dbReference>
<dbReference type="EMBL" id="CP002686">
    <property type="protein sequence ID" value="AEE79282.1"/>
    <property type="molecule type" value="Genomic_DNA"/>
</dbReference>
<dbReference type="EMBL" id="AK230287">
    <property type="protein sequence ID" value="BAF02089.1"/>
    <property type="status" value="ALT_SEQ"/>
    <property type="molecule type" value="mRNA"/>
</dbReference>
<dbReference type="EMBL" id="AY084706">
    <property type="protein sequence ID" value="AAM61280.1"/>
    <property type="molecule type" value="mRNA"/>
</dbReference>
<dbReference type="PIR" id="T47636">
    <property type="entry name" value="T47636"/>
</dbReference>
<dbReference type="RefSeq" id="NP_191037.1">
    <molecule id="Q9M1S3-1"/>
    <property type="nucleotide sequence ID" value="NM_115334.4"/>
</dbReference>
<dbReference type="SMR" id="Q9M1S3"/>
<dbReference type="FunCoup" id="Q9M1S3">
    <property type="interactions" value="396"/>
</dbReference>
<dbReference type="STRING" id="3702.Q9M1S3"/>
<dbReference type="PaxDb" id="3702-AT3G54770.1"/>
<dbReference type="ProteomicsDB" id="246978">
    <molecule id="Q9M1S3-1"/>
</dbReference>
<dbReference type="DNASU" id="824642"/>
<dbReference type="EnsemblPlants" id="AT3G54770.1">
    <molecule id="Q9M1S3-1"/>
    <property type="protein sequence ID" value="AT3G54770.1"/>
    <property type="gene ID" value="AT3G54770"/>
</dbReference>
<dbReference type="GeneID" id="824642"/>
<dbReference type="Gramene" id="AT3G54770.1">
    <molecule id="Q9M1S3-1"/>
    <property type="protein sequence ID" value="AT3G54770.1"/>
    <property type="gene ID" value="AT3G54770"/>
</dbReference>
<dbReference type="KEGG" id="ath:AT3G54770"/>
<dbReference type="Araport" id="AT3G54770"/>
<dbReference type="TAIR" id="AT3G54770">
    <property type="gene designation" value="ARP1"/>
</dbReference>
<dbReference type="eggNOG" id="KOG0149">
    <property type="taxonomic scope" value="Eukaryota"/>
</dbReference>
<dbReference type="HOGENOM" id="CLU_048669_2_0_1"/>
<dbReference type="InParanoid" id="Q9M1S3"/>
<dbReference type="PhylomeDB" id="Q9M1S3"/>
<dbReference type="PRO" id="PR:Q9M1S3"/>
<dbReference type="Proteomes" id="UP000006548">
    <property type="component" value="Chromosome 3"/>
</dbReference>
<dbReference type="ExpressionAtlas" id="Q9M1S3">
    <property type="expression patterns" value="baseline and differential"/>
</dbReference>
<dbReference type="GO" id="GO:0005634">
    <property type="term" value="C:nucleus"/>
    <property type="evidence" value="ECO:0000314"/>
    <property type="project" value="TAIR"/>
</dbReference>
<dbReference type="GO" id="GO:0003729">
    <property type="term" value="F:mRNA binding"/>
    <property type="evidence" value="ECO:0007005"/>
    <property type="project" value="TAIR"/>
</dbReference>
<dbReference type="GO" id="GO:0010029">
    <property type="term" value="P:regulation of seed germination"/>
    <property type="evidence" value="ECO:0000315"/>
    <property type="project" value="TAIR"/>
</dbReference>
<dbReference type="GO" id="GO:0009737">
    <property type="term" value="P:response to abscisic acid"/>
    <property type="evidence" value="ECO:0000270"/>
    <property type="project" value="TAIR"/>
</dbReference>
<dbReference type="GO" id="GO:0009651">
    <property type="term" value="P:response to salt stress"/>
    <property type="evidence" value="ECO:0000315"/>
    <property type="project" value="TAIR"/>
</dbReference>
<dbReference type="GO" id="GO:0009414">
    <property type="term" value="P:response to water deprivation"/>
    <property type="evidence" value="ECO:0000315"/>
    <property type="project" value="TAIR"/>
</dbReference>
<dbReference type="Gene3D" id="3.30.70.330">
    <property type="match status" value="1"/>
</dbReference>
<dbReference type="InterPro" id="IPR012677">
    <property type="entry name" value="Nucleotide-bd_a/b_plait_sf"/>
</dbReference>
<dbReference type="InterPro" id="IPR035979">
    <property type="entry name" value="RBD_domain_sf"/>
</dbReference>
<dbReference type="InterPro" id="IPR000504">
    <property type="entry name" value="RRM_dom"/>
</dbReference>
<dbReference type="PANTHER" id="PTHR11176">
    <property type="entry name" value="BOULE-RELATED"/>
    <property type="match status" value="1"/>
</dbReference>
<dbReference type="PANTHER" id="PTHR11176:SF56">
    <property type="entry name" value="RRM DOMAIN-CONTAINING PROTEIN"/>
    <property type="match status" value="1"/>
</dbReference>
<dbReference type="Pfam" id="PF00076">
    <property type="entry name" value="RRM_1"/>
    <property type="match status" value="1"/>
</dbReference>
<dbReference type="SMART" id="SM00360">
    <property type="entry name" value="RRM"/>
    <property type="match status" value="1"/>
</dbReference>
<dbReference type="SUPFAM" id="SSF54928">
    <property type="entry name" value="RNA-binding domain, RBD"/>
    <property type="match status" value="1"/>
</dbReference>
<dbReference type="PROSITE" id="PS50102">
    <property type="entry name" value="RRM"/>
    <property type="match status" value="1"/>
</dbReference>
<gene>
    <name evidence="4" type="primary">ARP1</name>
    <name evidence="6" type="ordered locus">At3g54770</name>
    <name evidence="7" type="ORF">T5N23.130</name>
</gene>
<proteinExistence type="evidence at transcript level"/>
<feature type="chain" id="PRO_0000433125" description="Probable RNA-binding protein ARP1">
    <location>
        <begin position="1"/>
        <end position="261"/>
    </location>
</feature>
<feature type="domain" description="RRM" evidence="1">
    <location>
        <begin position="17"/>
        <end position="94"/>
    </location>
</feature>
<feature type="region of interest" description="Disordered" evidence="2">
    <location>
        <begin position="96"/>
        <end position="122"/>
    </location>
</feature>
<feature type="compositionally biased region" description="Polar residues" evidence="2">
    <location>
        <begin position="102"/>
        <end position="116"/>
    </location>
</feature>
<feature type="sequence conflict" description="In Ref. 4; AAM61280." evidence="5" ref="4">
    <original>K</original>
    <variation>E</variation>
    <location>
        <position position="69"/>
    </location>
</feature>
<protein>
    <recommendedName>
        <fullName>Probable RNA-binding protein ARP1</fullName>
    </recommendedName>
    <alternativeName>
        <fullName evidence="4">ABA-regulated RNA-binding protein 1</fullName>
    </alternativeName>
</protein>
<organism>
    <name type="scientific">Arabidopsis thaliana</name>
    <name type="common">Mouse-ear cress</name>
    <dbReference type="NCBI Taxonomy" id="3702"/>
    <lineage>
        <taxon>Eukaryota</taxon>
        <taxon>Viridiplantae</taxon>
        <taxon>Streptophyta</taxon>
        <taxon>Embryophyta</taxon>
        <taxon>Tracheophyta</taxon>
        <taxon>Spermatophyta</taxon>
        <taxon>Magnoliopsida</taxon>
        <taxon>eudicotyledons</taxon>
        <taxon>Gunneridae</taxon>
        <taxon>Pentapetalae</taxon>
        <taxon>rosids</taxon>
        <taxon>malvids</taxon>
        <taxon>Brassicales</taxon>
        <taxon>Brassicaceae</taxon>
        <taxon>Camelineae</taxon>
        <taxon>Arabidopsis</taxon>
    </lineage>
</organism>
<accession>Q9M1S3</accession>
<accession>Q0WLB8</accession>
<accession>Q8LFQ5</accession>
<evidence type="ECO:0000255" key="1">
    <source>
        <dbReference type="PROSITE-ProRule" id="PRU00176"/>
    </source>
</evidence>
<evidence type="ECO:0000256" key="2">
    <source>
        <dbReference type="SAM" id="MobiDB-lite"/>
    </source>
</evidence>
<evidence type="ECO:0000269" key="3">
    <source>
    </source>
</evidence>
<evidence type="ECO:0000303" key="4">
    <source>
    </source>
</evidence>
<evidence type="ECO:0000305" key="5"/>
<evidence type="ECO:0000312" key="6">
    <source>
        <dbReference type="Araport" id="AT3G54770"/>
    </source>
</evidence>
<evidence type="ECO:0000312" key="7">
    <source>
        <dbReference type="EMBL" id="CAB77597.1"/>
    </source>
</evidence>